<feature type="chain" id="PRO_0000098832" description="Tryptophan synthase alpha chain">
    <location>
        <begin position="1"/>
        <end position="279"/>
    </location>
</feature>
<feature type="active site" description="Proton acceptor" evidence="1">
    <location>
        <position position="50"/>
    </location>
</feature>
<feature type="active site" description="Proton acceptor" evidence="1">
    <location>
        <position position="61"/>
    </location>
</feature>
<accession>Q92TC8</accession>
<comment type="function">
    <text evidence="1">The alpha subunit is responsible for the aldol cleavage of indoleglycerol phosphate to indole and glyceraldehyde 3-phosphate.</text>
</comment>
<comment type="catalytic activity">
    <reaction evidence="1">
        <text>(1S,2R)-1-C-(indol-3-yl)glycerol 3-phosphate + L-serine = D-glyceraldehyde 3-phosphate + L-tryptophan + H2O</text>
        <dbReference type="Rhea" id="RHEA:10532"/>
        <dbReference type="ChEBI" id="CHEBI:15377"/>
        <dbReference type="ChEBI" id="CHEBI:33384"/>
        <dbReference type="ChEBI" id="CHEBI:57912"/>
        <dbReference type="ChEBI" id="CHEBI:58866"/>
        <dbReference type="ChEBI" id="CHEBI:59776"/>
        <dbReference type="EC" id="4.2.1.20"/>
    </reaction>
</comment>
<comment type="pathway">
    <text evidence="1">Amino-acid biosynthesis; L-tryptophan biosynthesis; L-tryptophan from chorismate: step 5/5.</text>
</comment>
<comment type="subunit">
    <text evidence="1">Tetramer of two alpha and two beta chains.</text>
</comment>
<comment type="similarity">
    <text evidence="1">Belongs to the TrpA family.</text>
</comment>
<organism>
    <name type="scientific">Rhizobium meliloti (strain 1021)</name>
    <name type="common">Ensifer meliloti</name>
    <name type="synonym">Sinorhizobium meliloti</name>
    <dbReference type="NCBI Taxonomy" id="266834"/>
    <lineage>
        <taxon>Bacteria</taxon>
        <taxon>Pseudomonadati</taxon>
        <taxon>Pseudomonadota</taxon>
        <taxon>Alphaproteobacteria</taxon>
        <taxon>Hyphomicrobiales</taxon>
        <taxon>Rhizobiaceae</taxon>
        <taxon>Sinorhizobium/Ensifer group</taxon>
        <taxon>Sinorhizobium</taxon>
    </lineage>
</organism>
<reference key="1">
    <citation type="journal article" date="2001" name="Proc. Natl. Acad. Sci. U.S.A.">
        <title>Analysis of the chromosome sequence of the legume symbiont Sinorhizobium meliloti strain 1021.</title>
        <authorList>
            <person name="Capela D."/>
            <person name="Barloy-Hubler F."/>
            <person name="Gouzy J."/>
            <person name="Bothe G."/>
            <person name="Ampe F."/>
            <person name="Batut J."/>
            <person name="Boistard P."/>
            <person name="Becker A."/>
            <person name="Boutry M."/>
            <person name="Cadieu E."/>
            <person name="Dreano S."/>
            <person name="Gloux S."/>
            <person name="Godrie T."/>
            <person name="Goffeau A."/>
            <person name="Kahn D."/>
            <person name="Kiss E."/>
            <person name="Lelaure V."/>
            <person name="Masuy D."/>
            <person name="Pohl T."/>
            <person name="Portetelle D."/>
            <person name="Puehler A."/>
            <person name="Purnelle B."/>
            <person name="Ramsperger U."/>
            <person name="Renard C."/>
            <person name="Thebault P."/>
            <person name="Vandenbol M."/>
            <person name="Weidner S."/>
            <person name="Galibert F."/>
        </authorList>
    </citation>
    <scope>NUCLEOTIDE SEQUENCE [LARGE SCALE GENOMIC DNA]</scope>
    <source>
        <strain>1021</strain>
    </source>
</reference>
<reference key="2">
    <citation type="journal article" date="2001" name="Science">
        <title>The composite genome of the legume symbiont Sinorhizobium meliloti.</title>
        <authorList>
            <person name="Galibert F."/>
            <person name="Finan T.M."/>
            <person name="Long S.R."/>
            <person name="Puehler A."/>
            <person name="Abola P."/>
            <person name="Ampe F."/>
            <person name="Barloy-Hubler F."/>
            <person name="Barnett M.J."/>
            <person name="Becker A."/>
            <person name="Boistard P."/>
            <person name="Bothe G."/>
            <person name="Boutry M."/>
            <person name="Bowser L."/>
            <person name="Buhrmester J."/>
            <person name="Cadieu E."/>
            <person name="Capela D."/>
            <person name="Chain P."/>
            <person name="Cowie A."/>
            <person name="Davis R.W."/>
            <person name="Dreano S."/>
            <person name="Federspiel N.A."/>
            <person name="Fisher R.F."/>
            <person name="Gloux S."/>
            <person name="Godrie T."/>
            <person name="Goffeau A."/>
            <person name="Golding B."/>
            <person name="Gouzy J."/>
            <person name="Gurjal M."/>
            <person name="Hernandez-Lucas I."/>
            <person name="Hong A."/>
            <person name="Huizar L."/>
            <person name="Hyman R.W."/>
            <person name="Jones T."/>
            <person name="Kahn D."/>
            <person name="Kahn M.L."/>
            <person name="Kalman S."/>
            <person name="Keating D.H."/>
            <person name="Kiss E."/>
            <person name="Komp C."/>
            <person name="Lelaure V."/>
            <person name="Masuy D."/>
            <person name="Palm C."/>
            <person name="Peck M.C."/>
            <person name="Pohl T.M."/>
            <person name="Portetelle D."/>
            <person name="Purnelle B."/>
            <person name="Ramsperger U."/>
            <person name="Surzycki R."/>
            <person name="Thebault P."/>
            <person name="Vandenbol M."/>
            <person name="Vorhoelter F.J."/>
            <person name="Weidner S."/>
            <person name="Wells D.H."/>
            <person name="Wong K."/>
            <person name="Yeh K.-C."/>
            <person name="Batut J."/>
        </authorList>
    </citation>
    <scope>NUCLEOTIDE SEQUENCE [LARGE SCALE GENOMIC DNA]</scope>
    <source>
        <strain>1021</strain>
    </source>
</reference>
<proteinExistence type="inferred from homology"/>
<sequence length="279" mass="29326">MTARMEQRFADVAAEGRPVLVTYFMGGDPDFDTSLAIMKALRQAGADIIELGVPFSDPMADGPAIQLAGQRALKAGQSLAKTLELARLFRAEDQRTPIVLMGYYNPIYIYGVERFLADALEAGVDGLIVVDLPPEMDDELCIPALEKGISFIRLATPTTDDRRLPKVLENTSGFVYYVSMTGITGSALPDPSLIAGAVARIKAHTPLPVCVGFGVKTADHARAIGASADGVVVGTAIVNQIASSLTEEGRATEATVPGVEALVRGLAAGVRAARLAAAE</sequence>
<gene>
    <name evidence="1" type="primary">trpA</name>
    <name type="ordered locus">R00029</name>
    <name type="ORF">SMc02765</name>
</gene>
<dbReference type="EC" id="4.2.1.20" evidence="1"/>
<dbReference type="EMBL" id="AL591688">
    <property type="protein sequence ID" value="CAC41416.1"/>
    <property type="molecule type" value="Genomic_DNA"/>
</dbReference>
<dbReference type="RefSeq" id="NP_384135.1">
    <property type="nucleotide sequence ID" value="NC_003047.1"/>
</dbReference>
<dbReference type="RefSeq" id="WP_010968305.1">
    <property type="nucleotide sequence ID" value="NC_003047.1"/>
</dbReference>
<dbReference type="SMR" id="Q92TC8"/>
<dbReference type="EnsemblBacteria" id="CAC41416">
    <property type="protein sequence ID" value="CAC41416"/>
    <property type="gene ID" value="SMc02765"/>
</dbReference>
<dbReference type="GeneID" id="89574345"/>
<dbReference type="KEGG" id="sme:SMc02765"/>
<dbReference type="PATRIC" id="fig|266834.11.peg.1382"/>
<dbReference type="eggNOG" id="COG0159">
    <property type="taxonomic scope" value="Bacteria"/>
</dbReference>
<dbReference type="HOGENOM" id="CLU_016734_0_0_5"/>
<dbReference type="OrthoDB" id="9804578at2"/>
<dbReference type="UniPathway" id="UPA00035">
    <property type="reaction ID" value="UER00044"/>
</dbReference>
<dbReference type="Proteomes" id="UP000001976">
    <property type="component" value="Chromosome"/>
</dbReference>
<dbReference type="GO" id="GO:0005829">
    <property type="term" value="C:cytosol"/>
    <property type="evidence" value="ECO:0007669"/>
    <property type="project" value="TreeGrafter"/>
</dbReference>
<dbReference type="GO" id="GO:0004834">
    <property type="term" value="F:tryptophan synthase activity"/>
    <property type="evidence" value="ECO:0007669"/>
    <property type="project" value="UniProtKB-UniRule"/>
</dbReference>
<dbReference type="CDD" id="cd04724">
    <property type="entry name" value="Tryptophan_synthase_alpha"/>
    <property type="match status" value="1"/>
</dbReference>
<dbReference type="FunFam" id="3.20.20.70:FF:000037">
    <property type="entry name" value="Tryptophan synthase alpha chain"/>
    <property type="match status" value="1"/>
</dbReference>
<dbReference type="Gene3D" id="3.20.20.70">
    <property type="entry name" value="Aldolase class I"/>
    <property type="match status" value="1"/>
</dbReference>
<dbReference type="HAMAP" id="MF_00131">
    <property type="entry name" value="Trp_synth_alpha"/>
    <property type="match status" value="1"/>
</dbReference>
<dbReference type="InterPro" id="IPR013785">
    <property type="entry name" value="Aldolase_TIM"/>
</dbReference>
<dbReference type="InterPro" id="IPR011060">
    <property type="entry name" value="RibuloseP-bd_barrel"/>
</dbReference>
<dbReference type="InterPro" id="IPR018204">
    <property type="entry name" value="Trp_synthase_alpha_AS"/>
</dbReference>
<dbReference type="InterPro" id="IPR002028">
    <property type="entry name" value="Trp_synthase_suA"/>
</dbReference>
<dbReference type="NCBIfam" id="TIGR00262">
    <property type="entry name" value="trpA"/>
    <property type="match status" value="1"/>
</dbReference>
<dbReference type="PANTHER" id="PTHR43406:SF1">
    <property type="entry name" value="TRYPTOPHAN SYNTHASE ALPHA CHAIN, CHLOROPLASTIC"/>
    <property type="match status" value="1"/>
</dbReference>
<dbReference type="PANTHER" id="PTHR43406">
    <property type="entry name" value="TRYPTOPHAN SYNTHASE, ALPHA CHAIN"/>
    <property type="match status" value="1"/>
</dbReference>
<dbReference type="Pfam" id="PF00290">
    <property type="entry name" value="Trp_syntA"/>
    <property type="match status" value="1"/>
</dbReference>
<dbReference type="SUPFAM" id="SSF51366">
    <property type="entry name" value="Ribulose-phoshate binding barrel"/>
    <property type="match status" value="1"/>
</dbReference>
<dbReference type="PROSITE" id="PS00167">
    <property type="entry name" value="TRP_SYNTHASE_ALPHA"/>
    <property type="match status" value="1"/>
</dbReference>
<evidence type="ECO:0000255" key="1">
    <source>
        <dbReference type="HAMAP-Rule" id="MF_00131"/>
    </source>
</evidence>
<protein>
    <recommendedName>
        <fullName evidence="1">Tryptophan synthase alpha chain</fullName>
        <ecNumber evidence="1">4.2.1.20</ecNumber>
    </recommendedName>
</protein>
<name>TRPA_RHIME</name>
<keyword id="KW-0028">Amino-acid biosynthesis</keyword>
<keyword id="KW-0057">Aromatic amino acid biosynthesis</keyword>
<keyword id="KW-0456">Lyase</keyword>
<keyword id="KW-1185">Reference proteome</keyword>
<keyword id="KW-0822">Tryptophan biosynthesis</keyword>